<accession>Q8YAG2</accession>
<feature type="chain" id="PRO_0000211913" description="Replication initiation control protein YabA">
    <location>
        <begin position="1"/>
        <end position="129"/>
    </location>
</feature>
<feature type="region of interest" description="Disordered" evidence="2">
    <location>
        <begin position="52"/>
        <end position="71"/>
    </location>
</feature>
<feature type="compositionally biased region" description="Basic and acidic residues" evidence="2">
    <location>
        <begin position="60"/>
        <end position="71"/>
    </location>
</feature>
<feature type="binding site" evidence="1">
    <location>
        <position position="103"/>
    </location>
    <ligand>
        <name>Zn(2+)</name>
        <dbReference type="ChEBI" id="CHEBI:29105"/>
    </ligand>
</feature>
<feature type="binding site" evidence="1">
    <location>
        <position position="105"/>
    </location>
    <ligand>
        <name>Zn(2+)</name>
        <dbReference type="ChEBI" id="CHEBI:29105"/>
    </ligand>
</feature>
<feature type="binding site" evidence="1">
    <location>
        <position position="119"/>
    </location>
    <ligand>
        <name>Zn(2+)</name>
        <dbReference type="ChEBI" id="CHEBI:29105"/>
    </ligand>
</feature>
<feature type="binding site" evidence="1">
    <location>
        <position position="122"/>
    </location>
    <ligand>
        <name>Zn(2+)</name>
        <dbReference type="ChEBI" id="CHEBI:29105"/>
    </ligand>
</feature>
<sequence length="129" mass="14785">MDKKAIFDSVSNMEEQIGELYQQLGDLKTNLGEMLEENNRLNLENEHLRRRLSLTDEATPEPKAETEAEHGVMAPNRKEAMQQMIELGEGYDNLVQLYKEGFHVCNVHFGSPRGNDEDCLFCLSLLNKK</sequence>
<reference key="1">
    <citation type="journal article" date="2001" name="Science">
        <title>Comparative genomics of Listeria species.</title>
        <authorList>
            <person name="Glaser P."/>
            <person name="Frangeul L."/>
            <person name="Buchrieser C."/>
            <person name="Rusniok C."/>
            <person name="Amend A."/>
            <person name="Baquero F."/>
            <person name="Berche P."/>
            <person name="Bloecker H."/>
            <person name="Brandt P."/>
            <person name="Chakraborty T."/>
            <person name="Charbit A."/>
            <person name="Chetouani F."/>
            <person name="Couve E."/>
            <person name="de Daruvar A."/>
            <person name="Dehoux P."/>
            <person name="Domann E."/>
            <person name="Dominguez-Bernal G."/>
            <person name="Duchaud E."/>
            <person name="Durant L."/>
            <person name="Dussurget O."/>
            <person name="Entian K.-D."/>
            <person name="Fsihi H."/>
            <person name="Garcia-del Portillo F."/>
            <person name="Garrido P."/>
            <person name="Gautier L."/>
            <person name="Goebel W."/>
            <person name="Gomez-Lopez N."/>
            <person name="Hain T."/>
            <person name="Hauf J."/>
            <person name="Jackson D."/>
            <person name="Jones L.-M."/>
            <person name="Kaerst U."/>
            <person name="Kreft J."/>
            <person name="Kuhn M."/>
            <person name="Kunst F."/>
            <person name="Kurapkat G."/>
            <person name="Madueno E."/>
            <person name="Maitournam A."/>
            <person name="Mata Vicente J."/>
            <person name="Ng E."/>
            <person name="Nedjari H."/>
            <person name="Nordsiek G."/>
            <person name="Novella S."/>
            <person name="de Pablos B."/>
            <person name="Perez-Diaz J.-C."/>
            <person name="Purcell R."/>
            <person name="Remmel B."/>
            <person name="Rose M."/>
            <person name="Schlueter T."/>
            <person name="Simoes N."/>
            <person name="Tierrez A."/>
            <person name="Vazquez-Boland J.-A."/>
            <person name="Voss H."/>
            <person name="Wehland J."/>
            <person name="Cossart P."/>
        </authorList>
    </citation>
    <scope>NUCLEOTIDE SEQUENCE [LARGE SCALE GENOMIC DNA]</scope>
    <source>
        <strain>ATCC BAA-679 / EGD-e</strain>
    </source>
</reference>
<organism>
    <name type="scientific">Listeria monocytogenes serovar 1/2a (strain ATCC BAA-679 / EGD-e)</name>
    <dbReference type="NCBI Taxonomy" id="169963"/>
    <lineage>
        <taxon>Bacteria</taxon>
        <taxon>Bacillati</taxon>
        <taxon>Bacillota</taxon>
        <taxon>Bacilli</taxon>
        <taxon>Bacillales</taxon>
        <taxon>Listeriaceae</taxon>
        <taxon>Listeria</taxon>
    </lineage>
</organism>
<name>YABA_LISMO</name>
<keyword id="KW-0963">Cytoplasm</keyword>
<keyword id="KW-0235">DNA replication</keyword>
<keyword id="KW-0236">DNA replication inhibitor</keyword>
<keyword id="KW-0479">Metal-binding</keyword>
<keyword id="KW-1185">Reference proteome</keyword>
<keyword id="KW-0862">Zinc</keyword>
<proteinExistence type="inferred from homology"/>
<dbReference type="EMBL" id="AL591973">
    <property type="protein sequence ID" value="CAC98379.1"/>
    <property type="molecule type" value="Genomic_DNA"/>
</dbReference>
<dbReference type="PIR" id="AE1095">
    <property type="entry name" value="AE1095"/>
</dbReference>
<dbReference type="RefSeq" id="NP_463697.1">
    <property type="nucleotide sequence ID" value="NC_003210.1"/>
</dbReference>
<dbReference type="RefSeq" id="WP_003723491.1">
    <property type="nucleotide sequence ID" value="NZ_CP149495.1"/>
</dbReference>
<dbReference type="SMR" id="Q8YAG2"/>
<dbReference type="STRING" id="169963.gene:17592800"/>
<dbReference type="PaxDb" id="169963-lmo0164"/>
<dbReference type="EnsemblBacteria" id="CAC98379">
    <property type="protein sequence ID" value="CAC98379"/>
    <property type="gene ID" value="CAC98379"/>
</dbReference>
<dbReference type="GeneID" id="86846975"/>
<dbReference type="GeneID" id="986868"/>
<dbReference type="KEGG" id="lmo:lmo0164"/>
<dbReference type="PATRIC" id="fig|169963.11.peg.167"/>
<dbReference type="eggNOG" id="COG4467">
    <property type="taxonomic scope" value="Bacteria"/>
</dbReference>
<dbReference type="HOGENOM" id="CLU_157169_0_0_9"/>
<dbReference type="OrthoDB" id="2112130at2"/>
<dbReference type="PhylomeDB" id="Q8YAG2"/>
<dbReference type="BioCyc" id="LMON169963:LMO0164-MONOMER"/>
<dbReference type="Proteomes" id="UP000000817">
    <property type="component" value="Chromosome"/>
</dbReference>
<dbReference type="GO" id="GO:0009295">
    <property type="term" value="C:nucleoid"/>
    <property type="evidence" value="ECO:0007669"/>
    <property type="project" value="UniProtKB-SubCell"/>
</dbReference>
<dbReference type="GO" id="GO:0006260">
    <property type="term" value="P:DNA replication"/>
    <property type="evidence" value="ECO:0007669"/>
    <property type="project" value="UniProtKB-UniRule"/>
</dbReference>
<dbReference type="HAMAP" id="MF_01159">
    <property type="entry name" value="YabA"/>
    <property type="match status" value="1"/>
</dbReference>
<dbReference type="InterPro" id="IPR010377">
    <property type="entry name" value="YabA"/>
</dbReference>
<dbReference type="NCBIfam" id="NF009643">
    <property type="entry name" value="PRK13169.1-4"/>
    <property type="match status" value="1"/>
</dbReference>
<dbReference type="NCBIfam" id="NF009644">
    <property type="entry name" value="PRK13169.1-5"/>
    <property type="match status" value="1"/>
</dbReference>
<dbReference type="Pfam" id="PF06156">
    <property type="entry name" value="YabA"/>
    <property type="match status" value="1"/>
</dbReference>
<dbReference type="PIRSF" id="PIRSF021439">
    <property type="entry name" value="DUF972"/>
    <property type="match status" value="1"/>
</dbReference>
<gene>
    <name evidence="1" type="primary">yabA</name>
    <name type="ordered locus">lmo0164</name>
</gene>
<evidence type="ECO:0000255" key="1">
    <source>
        <dbReference type="HAMAP-Rule" id="MF_01159"/>
    </source>
</evidence>
<evidence type="ECO:0000256" key="2">
    <source>
        <dbReference type="SAM" id="MobiDB-lite"/>
    </source>
</evidence>
<comment type="function">
    <text evidence="1">Involved in control of chromosome replication initiation. Inhibits the cooperative binding of DnaA to the oriC region, thus negatively regulating initiation of chromosome replication. Inhibits the ability of DnaA-ATP to form a helix on DNA; does not disassemble preformed DnaA-DNA helices. Decreases the residence time of DnaA on the chromosome at its binding sites (oriC, replication forks and promoter-binding sites). Tethers DnaA to the replication machinery via the DNA polymerase beta sliding clamp subunit (dnaN). Associates with oriC and other DnaA targets on the chromosome in a DnaA-dependent manner.</text>
</comment>
<comment type="cofactor">
    <cofactor evidence="1">
        <name>Zn(2+)</name>
        <dbReference type="ChEBI" id="CHEBI:29105"/>
    </cofactor>
    <text evidence="1">Binds 1 zinc ion per subunit.</text>
</comment>
<comment type="subunit">
    <text evidence="1">Homotetramer. Interacts with both DnaA and DnaN, acting as a bridge between these two proteins.</text>
</comment>
<comment type="subcellular location">
    <subcellularLocation>
        <location evidence="1">Cytoplasm</location>
        <location evidence="1">Nucleoid</location>
    </subcellularLocation>
    <text evidence="1">Localizes in tight foci, which correspond to the replisome at mid-cell throughout the cell cycle.</text>
</comment>
<comment type="similarity">
    <text evidence="1">Belongs to the YabA family.</text>
</comment>
<protein>
    <recommendedName>
        <fullName evidence="1">Replication initiation control protein YabA</fullName>
    </recommendedName>
</protein>